<feature type="chain" id="PRO_1000144987" description="Protein translocase subunit SecA">
    <location>
        <begin position="1"/>
        <end position="915"/>
    </location>
</feature>
<feature type="region of interest" description="Disordered" evidence="2">
    <location>
        <begin position="854"/>
        <end position="915"/>
    </location>
</feature>
<feature type="binding site" evidence="1">
    <location>
        <position position="87"/>
    </location>
    <ligand>
        <name>ATP</name>
        <dbReference type="ChEBI" id="CHEBI:30616"/>
    </ligand>
</feature>
<feature type="binding site" evidence="1">
    <location>
        <begin position="105"/>
        <end position="109"/>
    </location>
    <ligand>
        <name>ATP</name>
        <dbReference type="ChEBI" id="CHEBI:30616"/>
    </ligand>
</feature>
<feature type="binding site" evidence="1">
    <location>
        <position position="516"/>
    </location>
    <ligand>
        <name>ATP</name>
        <dbReference type="ChEBI" id="CHEBI:30616"/>
    </ligand>
</feature>
<feature type="binding site" evidence="1">
    <location>
        <position position="899"/>
    </location>
    <ligand>
        <name>Zn(2+)</name>
        <dbReference type="ChEBI" id="CHEBI:29105"/>
    </ligand>
</feature>
<feature type="binding site" evidence="1">
    <location>
        <position position="901"/>
    </location>
    <ligand>
        <name>Zn(2+)</name>
        <dbReference type="ChEBI" id="CHEBI:29105"/>
    </ligand>
</feature>
<feature type="binding site" evidence="1">
    <location>
        <position position="910"/>
    </location>
    <ligand>
        <name>Zn(2+)</name>
        <dbReference type="ChEBI" id="CHEBI:29105"/>
    </ligand>
</feature>
<feature type="binding site" evidence="1">
    <location>
        <position position="911"/>
    </location>
    <ligand>
        <name>Zn(2+)</name>
        <dbReference type="ChEBI" id="CHEBI:29105"/>
    </ligand>
</feature>
<sequence>MIGKLIKKIFGSKNERELKRMGKVVTLINALEPELQKLSDEQLKEKTTELRNRYSAGETLDQLLPEAFAVVREAGRRVLGMRHFDVQLIGGMTLHEGRIAEMRTGEGKTLVSTLPAYLHALAGKGVHVVTVNDYLASRDANWMRPLYEALGMSVGVIQSMQPAVLKRQAYASDITYGTNNEYGFDYLRDNMALSKQDKVQRPLNYAIIDEVDSILIDEARTPLIISGAAENSAEMYKRVNQLVTKLTRQIDNGEDGDRRVISVAGDFTVDEKSRQVELTEGGHQHVEELLIKANLLAPDQNLYAANNLTLLHHVNSALRAHALFHRDIEYIVQEGQVVLIDEHTGRTMPGRRLSEGLHQAIEAKESVEIQSESQTLASTTFQNYFRLYPTLAGMTGTADTEAYEFREIYGLDVVVIPTNRPIQRIDMNDKVYLSLEEKYAAIVEDVKAFSANNAPVLVGTASIETSEEMSRRLTSAGIKHQVLNAKFHAQEAEIIAQAGRPGTVTIATNMAGRGTDIVLGGRWESEVEKLENATPEQIDAIKAEWEKRHDIVLAAGGLHIVGTERHESRRIDNQLRGRAGRQGDPGVTRFYLSLEDNLMRIFASDRMRNFMQALGMEKGEAIEHRMVNNAIENAQRKVEGRNFDIRKQLLEFDDVANDQRQIVYHQRNELLDAENIRDTITVVRADVLNDVVSQYIPPQSIEDMWDIAGLEKQLEVDFGLRLSIAKWLEEDTRLHEEPLRKRILDEVQATYDAKCERIGEIMLEIEKQVMLQVLDNSWKEHLAAMDHLRQGINLRSYAQRNPKQEYKRESFELFQQLLQRVKHETIHLLARVEPITREQMEAMEIQRREELARQKMQMRHEQLSAMPESPEAESEPAAAPQRQAPVVREGRKVGRNDPCPCGSGKKYKNCHGQLE</sequence>
<keyword id="KW-0067">ATP-binding</keyword>
<keyword id="KW-0997">Cell inner membrane</keyword>
<keyword id="KW-1003">Cell membrane</keyword>
<keyword id="KW-0963">Cytoplasm</keyword>
<keyword id="KW-0472">Membrane</keyword>
<keyword id="KW-0479">Metal-binding</keyword>
<keyword id="KW-0547">Nucleotide-binding</keyword>
<keyword id="KW-0653">Protein transport</keyword>
<keyword id="KW-1185">Reference proteome</keyword>
<keyword id="KW-1278">Translocase</keyword>
<keyword id="KW-0811">Translocation</keyword>
<keyword id="KW-0813">Transport</keyword>
<keyword id="KW-0862">Zinc</keyword>
<reference key="1">
    <citation type="journal article" date="2008" name="J. Bacteriol.">
        <title>Insights into plant cell wall degradation from the genome sequence of the soil bacterium Cellvibrio japonicus.</title>
        <authorList>
            <person name="DeBoy R.T."/>
            <person name="Mongodin E.F."/>
            <person name="Fouts D.E."/>
            <person name="Tailford L.E."/>
            <person name="Khouri H."/>
            <person name="Emerson J.B."/>
            <person name="Mohamoud Y."/>
            <person name="Watkins K."/>
            <person name="Henrissat B."/>
            <person name="Gilbert H.J."/>
            <person name="Nelson K.E."/>
        </authorList>
    </citation>
    <scope>NUCLEOTIDE SEQUENCE [LARGE SCALE GENOMIC DNA]</scope>
    <source>
        <strain>Ueda107</strain>
    </source>
</reference>
<accession>B3PCL0</accession>
<protein>
    <recommendedName>
        <fullName evidence="1">Protein translocase subunit SecA</fullName>
        <ecNumber evidence="1">7.4.2.8</ecNumber>
    </recommendedName>
</protein>
<name>SECA_CELJU</name>
<organism>
    <name type="scientific">Cellvibrio japonicus (strain Ueda107)</name>
    <name type="common">Pseudomonas fluorescens subsp. cellulosa</name>
    <dbReference type="NCBI Taxonomy" id="498211"/>
    <lineage>
        <taxon>Bacteria</taxon>
        <taxon>Pseudomonadati</taxon>
        <taxon>Pseudomonadota</taxon>
        <taxon>Gammaproteobacteria</taxon>
        <taxon>Cellvibrionales</taxon>
        <taxon>Cellvibrionaceae</taxon>
        <taxon>Cellvibrio</taxon>
    </lineage>
</organism>
<evidence type="ECO:0000255" key="1">
    <source>
        <dbReference type="HAMAP-Rule" id="MF_01382"/>
    </source>
</evidence>
<evidence type="ECO:0000256" key="2">
    <source>
        <dbReference type="SAM" id="MobiDB-lite"/>
    </source>
</evidence>
<gene>
    <name evidence="1" type="primary">secA</name>
    <name type="ordered locus">CJA_2919</name>
</gene>
<comment type="function">
    <text evidence="1">Part of the Sec protein translocase complex. Interacts with the SecYEG preprotein conducting channel. Has a central role in coupling the hydrolysis of ATP to the transfer of proteins into and across the cell membrane, serving both as a receptor for the preprotein-SecB complex and as an ATP-driven molecular motor driving the stepwise translocation of polypeptide chains across the membrane.</text>
</comment>
<comment type="catalytic activity">
    <reaction evidence="1">
        <text>ATP + H2O + cellular proteinSide 1 = ADP + phosphate + cellular proteinSide 2.</text>
        <dbReference type="EC" id="7.4.2.8"/>
    </reaction>
</comment>
<comment type="cofactor">
    <cofactor evidence="1">
        <name>Zn(2+)</name>
        <dbReference type="ChEBI" id="CHEBI:29105"/>
    </cofactor>
    <text evidence="1">May bind 1 zinc ion per subunit.</text>
</comment>
<comment type="subunit">
    <text evidence="1">Monomer and homodimer. Part of the essential Sec protein translocation apparatus which comprises SecA, SecYEG and auxiliary proteins SecDF-YajC and YidC.</text>
</comment>
<comment type="subcellular location">
    <subcellularLocation>
        <location evidence="1">Cell inner membrane</location>
        <topology evidence="1">Peripheral membrane protein</topology>
        <orientation evidence="1">Cytoplasmic side</orientation>
    </subcellularLocation>
    <subcellularLocation>
        <location evidence="1">Cytoplasm</location>
    </subcellularLocation>
    <text evidence="1">Distribution is 50-50.</text>
</comment>
<comment type="similarity">
    <text evidence="1">Belongs to the SecA family.</text>
</comment>
<proteinExistence type="inferred from homology"/>
<dbReference type="EC" id="7.4.2.8" evidence="1"/>
<dbReference type="EMBL" id="CP000934">
    <property type="protein sequence ID" value="ACE83254.1"/>
    <property type="molecule type" value="Genomic_DNA"/>
</dbReference>
<dbReference type="RefSeq" id="WP_012488503.1">
    <property type="nucleotide sequence ID" value="NC_010995.1"/>
</dbReference>
<dbReference type="SMR" id="B3PCL0"/>
<dbReference type="STRING" id="498211.CJA_2919"/>
<dbReference type="KEGG" id="cja:CJA_2919"/>
<dbReference type="eggNOG" id="COG0653">
    <property type="taxonomic scope" value="Bacteria"/>
</dbReference>
<dbReference type="HOGENOM" id="CLU_005314_3_0_6"/>
<dbReference type="OrthoDB" id="9805579at2"/>
<dbReference type="Proteomes" id="UP000001036">
    <property type="component" value="Chromosome"/>
</dbReference>
<dbReference type="GO" id="GO:0031522">
    <property type="term" value="C:cell envelope Sec protein transport complex"/>
    <property type="evidence" value="ECO:0007669"/>
    <property type="project" value="TreeGrafter"/>
</dbReference>
<dbReference type="GO" id="GO:0005829">
    <property type="term" value="C:cytosol"/>
    <property type="evidence" value="ECO:0007669"/>
    <property type="project" value="TreeGrafter"/>
</dbReference>
<dbReference type="GO" id="GO:0005886">
    <property type="term" value="C:plasma membrane"/>
    <property type="evidence" value="ECO:0007669"/>
    <property type="project" value="UniProtKB-SubCell"/>
</dbReference>
<dbReference type="GO" id="GO:0005524">
    <property type="term" value="F:ATP binding"/>
    <property type="evidence" value="ECO:0007669"/>
    <property type="project" value="UniProtKB-UniRule"/>
</dbReference>
<dbReference type="GO" id="GO:0046872">
    <property type="term" value="F:metal ion binding"/>
    <property type="evidence" value="ECO:0007669"/>
    <property type="project" value="UniProtKB-KW"/>
</dbReference>
<dbReference type="GO" id="GO:0008564">
    <property type="term" value="F:protein-exporting ATPase activity"/>
    <property type="evidence" value="ECO:0007669"/>
    <property type="project" value="UniProtKB-EC"/>
</dbReference>
<dbReference type="GO" id="GO:0065002">
    <property type="term" value="P:intracellular protein transmembrane transport"/>
    <property type="evidence" value="ECO:0007669"/>
    <property type="project" value="UniProtKB-UniRule"/>
</dbReference>
<dbReference type="GO" id="GO:0017038">
    <property type="term" value="P:protein import"/>
    <property type="evidence" value="ECO:0007669"/>
    <property type="project" value="InterPro"/>
</dbReference>
<dbReference type="GO" id="GO:0006605">
    <property type="term" value="P:protein targeting"/>
    <property type="evidence" value="ECO:0007669"/>
    <property type="project" value="UniProtKB-UniRule"/>
</dbReference>
<dbReference type="GO" id="GO:0043952">
    <property type="term" value="P:protein transport by the Sec complex"/>
    <property type="evidence" value="ECO:0007669"/>
    <property type="project" value="TreeGrafter"/>
</dbReference>
<dbReference type="CDD" id="cd17928">
    <property type="entry name" value="DEXDc_SecA"/>
    <property type="match status" value="1"/>
</dbReference>
<dbReference type="CDD" id="cd18803">
    <property type="entry name" value="SF2_C_secA"/>
    <property type="match status" value="1"/>
</dbReference>
<dbReference type="FunFam" id="3.40.50.300:FF:000113">
    <property type="entry name" value="Preprotein translocase subunit SecA"/>
    <property type="match status" value="1"/>
</dbReference>
<dbReference type="FunFam" id="3.90.1440.10:FF:000001">
    <property type="entry name" value="Preprotein translocase subunit SecA"/>
    <property type="match status" value="1"/>
</dbReference>
<dbReference type="FunFam" id="1.10.3060.10:FF:000003">
    <property type="entry name" value="Protein translocase subunit SecA"/>
    <property type="match status" value="1"/>
</dbReference>
<dbReference type="FunFam" id="3.40.50.300:FF:000334">
    <property type="entry name" value="Protein translocase subunit SecA"/>
    <property type="match status" value="1"/>
</dbReference>
<dbReference type="Gene3D" id="1.10.3060.10">
    <property type="entry name" value="Helical scaffold and wing domains of SecA"/>
    <property type="match status" value="1"/>
</dbReference>
<dbReference type="Gene3D" id="3.40.50.300">
    <property type="entry name" value="P-loop containing nucleotide triphosphate hydrolases"/>
    <property type="match status" value="2"/>
</dbReference>
<dbReference type="Gene3D" id="3.90.1440.10">
    <property type="entry name" value="SecA, preprotein cross-linking domain"/>
    <property type="match status" value="1"/>
</dbReference>
<dbReference type="HAMAP" id="MF_01382">
    <property type="entry name" value="SecA"/>
    <property type="match status" value="1"/>
</dbReference>
<dbReference type="InterPro" id="IPR014001">
    <property type="entry name" value="Helicase_ATP-bd"/>
</dbReference>
<dbReference type="InterPro" id="IPR001650">
    <property type="entry name" value="Helicase_C-like"/>
</dbReference>
<dbReference type="InterPro" id="IPR027417">
    <property type="entry name" value="P-loop_NTPase"/>
</dbReference>
<dbReference type="InterPro" id="IPR004027">
    <property type="entry name" value="SEC_C_motif"/>
</dbReference>
<dbReference type="InterPro" id="IPR000185">
    <property type="entry name" value="SecA"/>
</dbReference>
<dbReference type="InterPro" id="IPR020937">
    <property type="entry name" value="SecA_CS"/>
</dbReference>
<dbReference type="InterPro" id="IPR011115">
    <property type="entry name" value="SecA_DEAD"/>
</dbReference>
<dbReference type="InterPro" id="IPR014018">
    <property type="entry name" value="SecA_motor_DEAD"/>
</dbReference>
<dbReference type="InterPro" id="IPR011130">
    <property type="entry name" value="SecA_preprotein_X-link_dom"/>
</dbReference>
<dbReference type="InterPro" id="IPR044722">
    <property type="entry name" value="SecA_SF2_C"/>
</dbReference>
<dbReference type="InterPro" id="IPR011116">
    <property type="entry name" value="SecA_Wing/Scaffold"/>
</dbReference>
<dbReference type="InterPro" id="IPR036266">
    <property type="entry name" value="SecA_Wing/Scaffold_sf"/>
</dbReference>
<dbReference type="InterPro" id="IPR036670">
    <property type="entry name" value="SecA_X-link_sf"/>
</dbReference>
<dbReference type="NCBIfam" id="NF009538">
    <property type="entry name" value="PRK12904.1"/>
    <property type="match status" value="1"/>
</dbReference>
<dbReference type="NCBIfam" id="TIGR00963">
    <property type="entry name" value="secA"/>
    <property type="match status" value="1"/>
</dbReference>
<dbReference type="PANTHER" id="PTHR30612:SF0">
    <property type="entry name" value="CHLOROPLAST PROTEIN-TRANSPORTING ATPASE"/>
    <property type="match status" value="1"/>
</dbReference>
<dbReference type="PANTHER" id="PTHR30612">
    <property type="entry name" value="SECA INNER MEMBRANE COMPONENT OF SEC PROTEIN SECRETION SYSTEM"/>
    <property type="match status" value="1"/>
</dbReference>
<dbReference type="Pfam" id="PF21090">
    <property type="entry name" value="P-loop_SecA"/>
    <property type="match status" value="1"/>
</dbReference>
<dbReference type="Pfam" id="PF02810">
    <property type="entry name" value="SEC-C"/>
    <property type="match status" value="1"/>
</dbReference>
<dbReference type="Pfam" id="PF07517">
    <property type="entry name" value="SecA_DEAD"/>
    <property type="match status" value="1"/>
</dbReference>
<dbReference type="Pfam" id="PF01043">
    <property type="entry name" value="SecA_PP_bind"/>
    <property type="match status" value="1"/>
</dbReference>
<dbReference type="Pfam" id="PF07516">
    <property type="entry name" value="SecA_SW"/>
    <property type="match status" value="1"/>
</dbReference>
<dbReference type="PRINTS" id="PR00906">
    <property type="entry name" value="SECA"/>
</dbReference>
<dbReference type="SMART" id="SM00957">
    <property type="entry name" value="SecA_DEAD"/>
    <property type="match status" value="1"/>
</dbReference>
<dbReference type="SMART" id="SM00958">
    <property type="entry name" value="SecA_PP_bind"/>
    <property type="match status" value="1"/>
</dbReference>
<dbReference type="SUPFAM" id="SSF81886">
    <property type="entry name" value="Helical scaffold and wing domains of SecA"/>
    <property type="match status" value="1"/>
</dbReference>
<dbReference type="SUPFAM" id="SSF52540">
    <property type="entry name" value="P-loop containing nucleoside triphosphate hydrolases"/>
    <property type="match status" value="2"/>
</dbReference>
<dbReference type="SUPFAM" id="SSF81767">
    <property type="entry name" value="Pre-protein crosslinking domain of SecA"/>
    <property type="match status" value="1"/>
</dbReference>
<dbReference type="PROSITE" id="PS01312">
    <property type="entry name" value="SECA"/>
    <property type="match status" value="1"/>
</dbReference>
<dbReference type="PROSITE" id="PS51196">
    <property type="entry name" value="SECA_MOTOR_DEAD"/>
    <property type="match status" value="1"/>
</dbReference>